<accession>Q727C8</accession>
<feature type="chain" id="PRO_0000243420" description="Large ribosomal subunit protein bL12">
    <location>
        <begin position="1"/>
        <end position="127"/>
    </location>
</feature>
<feature type="region of interest" description="Disordered" evidence="2">
    <location>
        <begin position="94"/>
        <end position="114"/>
    </location>
</feature>
<feature type="compositionally biased region" description="Basic and acidic residues" evidence="2">
    <location>
        <begin position="104"/>
        <end position="114"/>
    </location>
</feature>
<evidence type="ECO:0000255" key="1">
    <source>
        <dbReference type="HAMAP-Rule" id="MF_00368"/>
    </source>
</evidence>
<evidence type="ECO:0000256" key="2">
    <source>
        <dbReference type="SAM" id="MobiDB-lite"/>
    </source>
</evidence>
<evidence type="ECO:0000305" key="3"/>
<comment type="function">
    <text evidence="1">Forms part of the ribosomal stalk which helps the ribosome interact with GTP-bound translation factors. Is thus essential for accurate translation.</text>
</comment>
<comment type="subunit">
    <text evidence="1">Homodimer. Part of the ribosomal stalk of the 50S ribosomal subunit. Forms a multimeric L10(L12)X complex, where L10 forms an elongated spine to which 2 to 4 L12 dimers bind in a sequential fashion. Binds GTP-bound translation factors.</text>
</comment>
<comment type="similarity">
    <text evidence="1">Belongs to the bacterial ribosomal protein bL12 family.</text>
</comment>
<reference key="1">
    <citation type="journal article" date="2004" name="Nat. Biotechnol.">
        <title>The genome sequence of the anaerobic, sulfate-reducing bacterium Desulfovibrio vulgaris Hildenborough.</title>
        <authorList>
            <person name="Heidelberg J.F."/>
            <person name="Seshadri R."/>
            <person name="Haveman S.A."/>
            <person name="Hemme C.L."/>
            <person name="Paulsen I.T."/>
            <person name="Kolonay J.F."/>
            <person name="Eisen J.A."/>
            <person name="Ward N.L."/>
            <person name="Methe B.A."/>
            <person name="Brinkac L.M."/>
            <person name="Daugherty S.C."/>
            <person name="DeBoy R.T."/>
            <person name="Dodson R.J."/>
            <person name="Durkin A.S."/>
            <person name="Madupu R."/>
            <person name="Nelson W.C."/>
            <person name="Sullivan S.A."/>
            <person name="Fouts D.E."/>
            <person name="Haft D.H."/>
            <person name="Selengut J."/>
            <person name="Peterson J.D."/>
            <person name="Davidsen T.M."/>
            <person name="Zafar N."/>
            <person name="Zhou L."/>
            <person name="Radune D."/>
            <person name="Dimitrov G."/>
            <person name="Hance M."/>
            <person name="Tran K."/>
            <person name="Khouri H.M."/>
            <person name="Gill J."/>
            <person name="Utterback T.R."/>
            <person name="Feldblyum T.V."/>
            <person name="Wall J.D."/>
            <person name="Voordouw G."/>
            <person name="Fraser C.M."/>
        </authorList>
    </citation>
    <scope>NUCLEOTIDE SEQUENCE [LARGE SCALE GENOMIC DNA]</scope>
    <source>
        <strain>ATCC 29579 / DSM 644 / CCUG 34227 / NCIMB 8303 / VKM B-1760 / Hildenborough</strain>
    </source>
</reference>
<proteinExistence type="inferred from homology"/>
<dbReference type="EMBL" id="AE017285">
    <property type="protein sequence ID" value="AAS97399.1"/>
    <property type="molecule type" value="Genomic_DNA"/>
</dbReference>
<dbReference type="RefSeq" id="WP_010940187.1">
    <property type="nucleotide sequence ID" value="NC_002937.3"/>
</dbReference>
<dbReference type="RefSeq" id="YP_012139.1">
    <property type="nucleotide sequence ID" value="NC_002937.3"/>
</dbReference>
<dbReference type="SMR" id="Q727C8"/>
<dbReference type="STRING" id="882.DVU_2927"/>
<dbReference type="PaxDb" id="882-DVU_2927"/>
<dbReference type="EnsemblBacteria" id="AAS97399">
    <property type="protein sequence ID" value="AAS97399"/>
    <property type="gene ID" value="DVU_2927"/>
</dbReference>
<dbReference type="KEGG" id="dvu:DVU_2927"/>
<dbReference type="PATRIC" id="fig|882.5.peg.2646"/>
<dbReference type="eggNOG" id="COG0222">
    <property type="taxonomic scope" value="Bacteria"/>
</dbReference>
<dbReference type="HOGENOM" id="CLU_086499_3_0_7"/>
<dbReference type="OrthoDB" id="9811748at2"/>
<dbReference type="PhylomeDB" id="Q727C8"/>
<dbReference type="Proteomes" id="UP000002194">
    <property type="component" value="Chromosome"/>
</dbReference>
<dbReference type="GO" id="GO:0022625">
    <property type="term" value="C:cytosolic large ribosomal subunit"/>
    <property type="evidence" value="ECO:0007669"/>
    <property type="project" value="TreeGrafter"/>
</dbReference>
<dbReference type="GO" id="GO:0003729">
    <property type="term" value="F:mRNA binding"/>
    <property type="evidence" value="ECO:0007669"/>
    <property type="project" value="TreeGrafter"/>
</dbReference>
<dbReference type="GO" id="GO:0003735">
    <property type="term" value="F:structural constituent of ribosome"/>
    <property type="evidence" value="ECO:0007669"/>
    <property type="project" value="InterPro"/>
</dbReference>
<dbReference type="GO" id="GO:0006412">
    <property type="term" value="P:translation"/>
    <property type="evidence" value="ECO:0007669"/>
    <property type="project" value="UniProtKB-UniRule"/>
</dbReference>
<dbReference type="CDD" id="cd00387">
    <property type="entry name" value="Ribosomal_L7_L12"/>
    <property type="match status" value="1"/>
</dbReference>
<dbReference type="FunFam" id="3.30.1390.10:FF:000001">
    <property type="entry name" value="50S ribosomal protein L7/L12"/>
    <property type="match status" value="1"/>
</dbReference>
<dbReference type="Gene3D" id="3.30.1390.10">
    <property type="match status" value="1"/>
</dbReference>
<dbReference type="Gene3D" id="1.20.5.710">
    <property type="entry name" value="Single helix bin"/>
    <property type="match status" value="1"/>
</dbReference>
<dbReference type="HAMAP" id="MF_00368">
    <property type="entry name" value="Ribosomal_bL12"/>
    <property type="match status" value="1"/>
</dbReference>
<dbReference type="InterPro" id="IPR000206">
    <property type="entry name" value="Ribosomal_bL12"/>
</dbReference>
<dbReference type="InterPro" id="IPR013823">
    <property type="entry name" value="Ribosomal_bL12_C"/>
</dbReference>
<dbReference type="InterPro" id="IPR014719">
    <property type="entry name" value="Ribosomal_bL12_C/ClpS-like"/>
</dbReference>
<dbReference type="InterPro" id="IPR008932">
    <property type="entry name" value="Ribosomal_bL12_oligo"/>
</dbReference>
<dbReference type="InterPro" id="IPR036235">
    <property type="entry name" value="Ribosomal_bL12_oligo_N_sf"/>
</dbReference>
<dbReference type="NCBIfam" id="TIGR00855">
    <property type="entry name" value="L12"/>
    <property type="match status" value="1"/>
</dbReference>
<dbReference type="PANTHER" id="PTHR45987">
    <property type="entry name" value="39S RIBOSOMAL PROTEIN L12"/>
    <property type="match status" value="1"/>
</dbReference>
<dbReference type="PANTHER" id="PTHR45987:SF4">
    <property type="entry name" value="LARGE RIBOSOMAL SUBUNIT PROTEIN BL12M"/>
    <property type="match status" value="1"/>
</dbReference>
<dbReference type="Pfam" id="PF00542">
    <property type="entry name" value="Ribosomal_L12"/>
    <property type="match status" value="1"/>
</dbReference>
<dbReference type="Pfam" id="PF16320">
    <property type="entry name" value="Ribosomal_L12_N"/>
    <property type="match status" value="1"/>
</dbReference>
<dbReference type="SUPFAM" id="SSF54736">
    <property type="entry name" value="ClpS-like"/>
    <property type="match status" value="1"/>
</dbReference>
<dbReference type="SUPFAM" id="SSF48300">
    <property type="entry name" value="Ribosomal protein L7/12, oligomerisation (N-terminal) domain"/>
    <property type="match status" value="1"/>
</dbReference>
<keyword id="KW-1185">Reference proteome</keyword>
<keyword id="KW-0687">Ribonucleoprotein</keyword>
<keyword id="KW-0689">Ribosomal protein</keyword>
<protein>
    <recommendedName>
        <fullName evidence="1">Large ribosomal subunit protein bL12</fullName>
    </recommendedName>
    <alternativeName>
        <fullName evidence="3">50S ribosomal protein L7/L12</fullName>
    </alternativeName>
</protein>
<name>RL7_NITV2</name>
<organism>
    <name type="scientific">Nitratidesulfovibrio vulgaris (strain ATCC 29579 / DSM 644 / CCUG 34227 / NCIMB 8303 / VKM B-1760 / Hildenborough)</name>
    <name type="common">Desulfovibrio vulgaris</name>
    <dbReference type="NCBI Taxonomy" id="882"/>
    <lineage>
        <taxon>Bacteria</taxon>
        <taxon>Pseudomonadati</taxon>
        <taxon>Thermodesulfobacteriota</taxon>
        <taxon>Desulfovibrionia</taxon>
        <taxon>Desulfovibrionales</taxon>
        <taxon>Desulfovibrionaceae</taxon>
        <taxon>Nitratidesulfovibrio</taxon>
    </lineage>
</organism>
<gene>
    <name evidence="1" type="primary">rplL</name>
    <name type="ordered locus">DVU_2927</name>
</gene>
<sequence>MSITKEQVVEFIGNMTVLELSEFIKELEEKFGVSAAAPMAAMAVAAPAGDAAPAEEEKTEFDIILKSAGANKIGVIKVVRALTGLGLKEAKDKVDGAPSTLKEAASKEEAEEAKKQLVEAGAEVEIK</sequence>